<reference key="1">
    <citation type="submission" date="2006-05" db="EMBL/GenBank/DDBJ databases">
        <title>Complete sequence of chromosome 1 of Burkholderia cenocepacia AU 1054.</title>
        <authorList>
            <consortium name="US DOE Joint Genome Institute"/>
            <person name="Copeland A."/>
            <person name="Lucas S."/>
            <person name="Lapidus A."/>
            <person name="Barry K."/>
            <person name="Detter J.C."/>
            <person name="Glavina del Rio T."/>
            <person name="Hammon N."/>
            <person name="Israni S."/>
            <person name="Dalin E."/>
            <person name="Tice H."/>
            <person name="Pitluck S."/>
            <person name="Chain P."/>
            <person name="Malfatti S."/>
            <person name="Shin M."/>
            <person name="Vergez L."/>
            <person name="Schmutz J."/>
            <person name="Larimer F."/>
            <person name="Land M."/>
            <person name="Hauser L."/>
            <person name="Kyrpides N."/>
            <person name="Lykidis A."/>
            <person name="LiPuma J.J."/>
            <person name="Konstantinidis K."/>
            <person name="Tiedje J.M."/>
            <person name="Richardson P."/>
        </authorList>
    </citation>
    <scope>NUCLEOTIDE SEQUENCE [LARGE SCALE GENOMIC DNA]</scope>
    <source>
        <strain>AU 1054</strain>
    </source>
</reference>
<feature type="chain" id="PRO_0000272719" description="Large ribosomal subunit protein uL23">
    <location>
        <begin position="1"/>
        <end position="104"/>
    </location>
</feature>
<keyword id="KW-0687">Ribonucleoprotein</keyword>
<keyword id="KW-0689">Ribosomal protein</keyword>
<keyword id="KW-0694">RNA-binding</keyword>
<keyword id="KW-0699">rRNA-binding</keyword>
<name>RL23_BURO1</name>
<comment type="function">
    <text evidence="1">One of the early assembly proteins it binds 23S rRNA. One of the proteins that surrounds the polypeptide exit tunnel on the outside of the ribosome. Forms the main docking site for trigger factor binding to the ribosome.</text>
</comment>
<comment type="subunit">
    <text evidence="1">Part of the 50S ribosomal subunit. Contacts protein L29, and trigger factor when it is bound to the ribosome.</text>
</comment>
<comment type="similarity">
    <text evidence="1">Belongs to the universal ribosomal protein uL23 family.</text>
</comment>
<proteinExistence type="inferred from homology"/>
<organism>
    <name type="scientific">Burkholderia orbicola (strain AU 1054)</name>
    <dbReference type="NCBI Taxonomy" id="331271"/>
    <lineage>
        <taxon>Bacteria</taxon>
        <taxon>Pseudomonadati</taxon>
        <taxon>Pseudomonadota</taxon>
        <taxon>Betaproteobacteria</taxon>
        <taxon>Burkholderiales</taxon>
        <taxon>Burkholderiaceae</taxon>
        <taxon>Burkholderia</taxon>
        <taxon>Burkholderia cepacia complex</taxon>
        <taxon>Burkholderia orbicola</taxon>
    </lineage>
</organism>
<dbReference type="EMBL" id="CP000378">
    <property type="protein sequence ID" value="ABF77655.1"/>
    <property type="molecule type" value="Genomic_DNA"/>
</dbReference>
<dbReference type="SMR" id="Q1BRV0"/>
<dbReference type="HOGENOM" id="CLU_037562_3_1_4"/>
<dbReference type="GO" id="GO:1990904">
    <property type="term" value="C:ribonucleoprotein complex"/>
    <property type="evidence" value="ECO:0007669"/>
    <property type="project" value="UniProtKB-KW"/>
</dbReference>
<dbReference type="GO" id="GO:0005840">
    <property type="term" value="C:ribosome"/>
    <property type="evidence" value="ECO:0007669"/>
    <property type="project" value="UniProtKB-KW"/>
</dbReference>
<dbReference type="GO" id="GO:0019843">
    <property type="term" value="F:rRNA binding"/>
    <property type="evidence" value="ECO:0007669"/>
    <property type="project" value="UniProtKB-UniRule"/>
</dbReference>
<dbReference type="GO" id="GO:0003735">
    <property type="term" value="F:structural constituent of ribosome"/>
    <property type="evidence" value="ECO:0007669"/>
    <property type="project" value="InterPro"/>
</dbReference>
<dbReference type="GO" id="GO:0006412">
    <property type="term" value="P:translation"/>
    <property type="evidence" value="ECO:0007669"/>
    <property type="project" value="UniProtKB-UniRule"/>
</dbReference>
<dbReference type="FunFam" id="3.30.70.330:FF:000001">
    <property type="entry name" value="50S ribosomal protein L23"/>
    <property type="match status" value="1"/>
</dbReference>
<dbReference type="Gene3D" id="3.30.70.330">
    <property type="match status" value="1"/>
</dbReference>
<dbReference type="HAMAP" id="MF_01369_B">
    <property type="entry name" value="Ribosomal_uL23_B"/>
    <property type="match status" value="1"/>
</dbReference>
<dbReference type="InterPro" id="IPR012677">
    <property type="entry name" value="Nucleotide-bd_a/b_plait_sf"/>
</dbReference>
<dbReference type="InterPro" id="IPR013025">
    <property type="entry name" value="Ribosomal_uL23-like"/>
</dbReference>
<dbReference type="InterPro" id="IPR012678">
    <property type="entry name" value="Ribosomal_uL23/eL15/eS24_sf"/>
</dbReference>
<dbReference type="NCBIfam" id="NF004359">
    <property type="entry name" value="PRK05738.1-3"/>
    <property type="match status" value="1"/>
</dbReference>
<dbReference type="NCBIfam" id="NF004363">
    <property type="entry name" value="PRK05738.2-4"/>
    <property type="match status" value="1"/>
</dbReference>
<dbReference type="PANTHER" id="PTHR11620">
    <property type="entry name" value="60S RIBOSOMAL PROTEIN L23A"/>
    <property type="match status" value="1"/>
</dbReference>
<dbReference type="Pfam" id="PF00276">
    <property type="entry name" value="Ribosomal_L23"/>
    <property type="match status" value="1"/>
</dbReference>
<dbReference type="SUPFAM" id="SSF54189">
    <property type="entry name" value="Ribosomal proteins S24e, L23 and L15e"/>
    <property type="match status" value="1"/>
</dbReference>
<accession>Q1BRV0</accession>
<protein>
    <recommendedName>
        <fullName evidence="1">Large ribosomal subunit protein uL23</fullName>
    </recommendedName>
    <alternativeName>
        <fullName evidence="2">50S ribosomal protein L23</fullName>
    </alternativeName>
</protein>
<sequence length="104" mass="11740">MSEIRKNDHRLMQVLLAPVISEKATLVADKNEQVVFEVAPDATKQEVKAAVELLFKVEVDSVNVLVQKGKQKRFGRSMGRRKDVKKAYVCLKPGQEINFEAEAK</sequence>
<gene>
    <name evidence="1" type="primary">rplW</name>
    <name type="ordered locus">Bcen_2757</name>
</gene>
<evidence type="ECO:0000255" key="1">
    <source>
        <dbReference type="HAMAP-Rule" id="MF_01369"/>
    </source>
</evidence>
<evidence type="ECO:0000305" key="2"/>